<comment type="function">
    <text evidence="4 7">Aerial growth, conidiation, and dispersal of filamentous fungi in the environment rely upon a capability of their secreting small amphipathic proteins called hydrophobins (HPBs) with low sequence identity. Class I can self-assemble into an outermost layer of rodlet bundles on aerial cell surfaces, conferring cellular hydrophobicity that supports fungal growth, development and dispersal; whereas Class II form highly ordered films at water-air interfaces through intermolecular interactions but contribute nothing to the rodlet structure (Probable). Abh2 is a class I hydrophobin involved in the emergence of aerial hyphae and strands (PubMed:9720057).</text>
</comment>
<comment type="subunit">
    <text evidence="4">Self-assembles to form functional amyloid fibrils called rodlets. Self-assembly into fibrillar rodlets occurs spontaneously at hydrophobic:hydrophilic interfaces and the rodlets further associate laterally to form amphipathic monolayers.</text>
</comment>
<comment type="subcellular location">
    <subcellularLocation>
        <location evidence="4">Secreted</location>
    </subcellularLocation>
    <subcellularLocation>
        <location evidence="4">Secreted</location>
        <location evidence="4">Cell wall</location>
    </subcellularLocation>
</comment>
<comment type="developmental stage">
    <text evidence="3">Expressed in the vegetative mycelium of both primary and secondary mycelium but not in the fruiting bodies.</text>
</comment>
<comment type="similarity">
    <text evidence="7">Belongs to the fungal hydrophobin family.</text>
</comment>
<evidence type="ECO:0000250" key="1">
    <source>
        <dbReference type="UniProtKB" id="Q04571"/>
    </source>
</evidence>
<evidence type="ECO:0000255" key="2"/>
<evidence type="ECO:0000269" key="3">
    <source>
    </source>
</evidence>
<evidence type="ECO:0000269" key="4">
    <source>
    </source>
</evidence>
<evidence type="ECO:0000303" key="5">
    <source>
    </source>
</evidence>
<evidence type="ECO:0000303" key="6">
    <source>
    </source>
</evidence>
<evidence type="ECO:0000305" key="7"/>
<protein>
    <recommendedName>
        <fullName evidence="5">Class I hydrophobin 2</fullName>
    </recommendedName>
</protein>
<name>HYPD_AGABI</name>
<accession>O13300</accession>
<accession>O13299</accession>
<gene>
    <name evidence="5" type="primary">abh2</name>
    <name evidence="6" type="synonym">abh3</name>
</gene>
<feature type="signal peptide" evidence="2">
    <location>
        <begin position="1"/>
        <end position="22"/>
    </location>
</feature>
<feature type="chain" id="PRO_0000013502" description="Class I hydrophobin 2">
    <location>
        <begin position="23"/>
        <end position="119"/>
    </location>
</feature>
<feature type="disulfide bond" evidence="1">
    <location>
        <begin position="36"/>
        <end position="97"/>
    </location>
</feature>
<feature type="disulfide bond" evidence="1">
    <location>
        <begin position="45"/>
        <end position="91"/>
    </location>
</feature>
<feature type="disulfide bond" evidence="1">
    <location>
        <begin position="46"/>
        <end position="79"/>
    </location>
</feature>
<feature type="disulfide bond" evidence="1">
    <location>
        <begin position="98"/>
        <end position="112"/>
    </location>
</feature>
<feature type="sequence variant" description="In strain: Horst 97.">
    <original>I</original>
    <variation>L</variation>
    <location>
        <position position="9"/>
    </location>
</feature>
<feature type="sequence variant" description="In strain: Horst 97.">
    <original>T</original>
    <variation>I</variation>
    <location>
        <position position="11"/>
    </location>
</feature>
<feature type="sequence variant" description="In strain: Horst 97.">
    <original>V</original>
    <variation>L</variation>
    <location>
        <position position="49"/>
    </location>
</feature>
<feature type="sequence variant" description="In strain: Horst 97.">
    <original>D</original>
    <variation>E</variation>
    <location>
        <position position="51"/>
    </location>
</feature>
<feature type="sequence variant" description="In strain: Horst 97.">
    <original>V</original>
    <variation>I</variation>
    <location>
        <position position="84"/>
    </location>
</feature>
<proteinExistence type="evidence at transcript level"/>
<sequence>MFARISTIITTLFFAMLAAATAVPRTDPPPATGSQCTAVGGDVNCCNSVQDASNPIVGLLAGLLGIVLGPIQGLVGLTCNPISVIGGGNSCSSQTVCCTGNNFSGGLLVIGCSPINIDL</sequence>
<dbReference type="EMBL" id="Y14601">
    <property type="protein sequence ID" value="CAA74939.1"/>
    <property type="molecule type" value="mRNA"/>
</dbReference>
<dbReference type="EMBL" id="Y14602">
    <property type="protein sequence ID" value="CAA74940.1"/>
    <property type="molecule type" value="mRNA"/>
</dbReference>
<dbReference type="SMR" id="O13300"/>
<dbReference type="GO" id="GO:0005576">
    <property type="term" value="C:extracellular region"/>
    <property type="evidence" value="ECO:0007669"/>
    <property type="project" value="UniProtKB-KW"/>
</dbReference>
<dbReference type="GO" id="GO:0009277">
    <property type="term" value="C:fungal-type cell wall"/>
    <property type="evidence" value="ECO:0007669"/>
    <property type="project" value="InterPro"/>
</dbReference>
<dbReference type="GO" id="GO:0005199">
    <property type="term" value="F:structural constituent of cell wall"/>
    <property type="evidence" value="ECO:0007669"/>
    <property type="project" value="InterPro"/>
</dbReference>
<dbReference type="CDD" id="cd23507">
    <property type="entry name" value="hydrophobin_I"/>
    <property type="match status" value="1"/>
</dbReference>
<dbReference type="InterPro" id="IPR001338">
    <property type="entry name" value="Hydrophobin"/>
</dbReference>
<dbReference type="InterPro" id="IPR019778">
    <property type="entry name" value="Hydrophobin_CS"/>
</dbReference>
<dbReference type="Pfam" id="PF01185">
    <property type="entry name" value="Hydrophobin"/>
    <property type="match status" value="1"/>
</dbReference>
<dbReference type="SMART" id="SM00075">
    <property type="entry name" value="HYDRO"/>
    <property type="match status" value="1"/>
</dbReference>
<dbReference type="PROSITE" id="PS00956">
    <property type="entry name" value="HYDROPHOBIN"/>
    <property type="match status" value="1"/>
</dbReference>
<keyword id="KW-0134">Cell wall</keyword>
<keyword id="KW-1015">Disulfide bond</keyword>
<keyword id="KW-0964">Secreted</keyword>
<keyword id="KW-0732">Signal</keyword>
<organism>
    <name type="scientific">Agaricus bisporus</name>
    <name type="common">White button mushroom</name>
    <dbReference type="NCBI Taxonomy" id="5341"/>
    <lineage>
        <taxon>Eukaryota</taxon>
        <taxon>Fungi</taxon>
        <taxon>Dikarya</taxon>
        <taxon>Basidiomycota</taxon>
        <taxon>Agaricomycotina</taxon>
        <taxon>Agaricomycetes</taxon>
        <taxon>Agaricomycetidae</taxon>
        <taxon>Agaricales</taxon>
        <taxon>Agaricineae</taxon>
        <taxon>Agaricaceae</taxon>
        <taxon>Agaricus</taxon>
    </lineage>
</organism>
<reference key="1">
    <citation type="journal article" date="1998" name="Microbiology">
        <title>A hydrophobin (ABH3) specifically secreted by vegetatively growing hyphae of Agaricus bisporus (common white button mushroom).</title>
        <authorList>
            <person name="Lugones L.G."/>
            <person name="Woesten H.A.B."/>
            <person name="Wessels J.G.H."/>
        </authorList>
    </citation>
    <scope>NUCLEOTIDE SEQUENCE [MRNA]</scope>
    <scope>DEVELOPMENTAL STAGE</scope>
    <scope>FUNCTION</scope>
    <scope>SUBCELLULAR LOCATION</scope>
    <source>
        <strain>Horst 97</strain>
        <strain>Horst H39</strain>
    </source>
</reference>
<reference key="2">
    <citation type="journal article" date="2025" name="Biochim. Biophys. Acta">
        <title>Assembly of Hydrophobin class I from Agaricus bisporus produced different amyloid-like fibrils.</title>
        <authorList>
            <person name="Rojas-Osnaya J."/>
            <person name="Najera H."/>
        </authorList>
    </citation>
    <scope>IDENTIFICATION</scope>
</reference>